<name>VATE_SPIOL</name>
<dbReference type="EMBL" id="X96785">
    <property type="protein sequence ID" value="CAA65581.1"/>
    <property type="molecule type" value="mRNA"/>
</dbReference>
<dbReference type="PIR" id="T09215">
    <property type="entry name" value="T09215"/>
</dbReference>
<dbReference type="SMR" id="Q41396"/>
<dbReference type="Proteomes" id="UP001155700">
    <property type="component" value="Unplaced"/>
</dbReference>
<dbReference type="GO" id="GO:0033178">
    <property type="term" value="C:proton-transporting two-sector ATPase complex, catalytic domain"/>
    <property type="evidence" value="ECO:0007669"/>
    <property type="project" value="InterPro"/>
</dbReference>
<dbReference type="GO" id="GO:0046961">
    <property type="term" value="F:proton-transporting ATPase activity, rotational mechanism"/>
    <property type="evidence" value="ECO:0000318"/>
    <property type="project" value="GO_Central"/>
</dbReference>
<dbReference type="Gene3D" id="6.10.250.1620">
    <property type="match status" value="1"/>
</dbReference>
<dbReference type="Gene3D" id="3.30.2320.30">
    <property type="entry name" value="ATP synthase, E subunit, C-terminal"/>
    <property type="match status" value="1"/>
</dbReference>
<dbReference type="HAMAP" id="MF_00311">
    <property type="entry name" value="ATP_synth_E_arch"/>
    <property type="match status" value="1"/>
</dbReference>
<dbReference type="InterPro" id="IPR038495">
    <property type="entry name" value="ATPase_E_C"/>
</dbReference>
<dbReference type="InterPro" id="IPR002842">
    <property type="entry name" value="ATPase_V1_Esu"/>
</dbReference>
<dbReference type="PANTHER" id="PTHR45715">
    <property type="entry name" value="ATPASE H+-TRANSPORTING V1 SUBUNIT E1A-RELATED"/>
    <property type="match status" value="1"/>
</dbReference>
<dbReference type="Pfam" id="PF01991">
    <property type="entry name" value="vATP-synt_E"/>
    <property type="match status" value="1"/>
</dbReference>
<dbReference type="SUPFAM" id="SSF160527">
    <property type="entry name" value="V-type ATPase subunit E-like"/>
    <property type="match status" value="1"/>
</dbReference>
<sequence length="229" mass="26400">MNDTDVQKQIQQMVRFIRQEAEEKANEISVAAEEEFNIEKLQLVEAEKKKIRPEYERKEKQVQVRRKIEYSMQLNASRIKVLQAQDDLVNSMKEEAAKELLRVSGDHHHYKRLLKELVVQSLLRLREPGVLLRCREDDVHLVEHVLNSAKEEYAEKAEVHTPEIIVDSIHLPAGPSHHKEHGLHCSGGVVLASRDGKIVFENTLDARLEVAFRKKLPQIRKQLFAVAAA</sequence>
<feature type="chain" id="PRO_0000117306" description="V-type proton ATPase subunit E">
    <location>
        <begin position="1"/>
        <end position="229"/>
    </location>
</feature>
<comment type="function">
    <text evidence="1">Subunit of the peripheral V1 complex of vacuolar ATPase essential for assembly or catalytic function. V-ATPase is responsible for acidifying a variety of intracellular compartments in eukaryotic cells (By similarity).</text>
</comment>
<comment type="subunit">
    <text>V-ATPase is a heteromultimeric enzyme composed of a peripheral catalytic V1 complex (components A to H) attached to an integral membrane V0 proton pore complex (components: a, c, c', c'' and d).</text>
</comment>
<comment type="similarity">
    <text evidence="2">Belongs to the V-ATPase E subunit family.</text>
</comment>
<accession>Q41396</accession>
<organism>
    <name type="scientific">Spinacia oleracea</name>
    <name type="common">Spinach</name>
    <dbReference type="NCBI Taxonomy" id="3562"/>
    <lineage>
        <taxon>Eukaryota</taxon>
        <taxon>Viridiplantae</taxon>
        <taxon>Streptophyta</taxon>
        <taxon>Embryophyta</taxon>
        <taxon>Tracheophyta</taxon>
        <taxon>Spermatophyta</taxon>
        <taxon>Magnoliopsida</taxon>
        <taxon>eudicotyledons</taxon>
        <taxon>Gunneridae</taxon>
        <taxon>Pentapetalae</taxon>
        <taxon>Caryophyllales</taxon>
        <taxon>Chenopodiaceae</taxon>
        <taxon>Chenopodioideae</taxon>
        <taxon>Anserineae</taxon>
        <taxon>Spinacia</taxon>
    </lineage>
</organism>
<reference key="1">
    <citation type="online journal article" date="1996" name="Plant Gene Register">
        <title>Nucleotide sequences of subunit E of the vacuolar proton-ATPase of Spinacia oleracea and Arabidopsis thaliana.</title>
        <authorList>
            <person name="Dietz K.-J."/>
            <person name="Hollenbach B."/>
            <person name="Arnold J."/>
        </authorList>
        <locator>PGR96-037</locator>
    </citation>
    <scope>NUCLEOTIDE SEQUENCE [MRNA]</scope>
    <source>
        <tissue>Leaf</tissue>
    </source>
</reference>
<keyword id="KW-0375">Hydrogen ion transport</keyword>
<keyword id="KW-0406">Ion transport</keyword>
<keyword id="KW-1185">Reference proteome</keyword>
<keyword id="KW-0813">Transport</keyword>
<proteinExistence type="evidence at transcript level"/>
<evidence type="ECO:0000250" key="1"/>
<evidence type="ECO:0000305" key="2"/>
<protein>
    <recommendedName>
        <fullName>V-type proton ATPase subunit E</fullName>
        <shortName>V-ATPase subunit E</shortName>
    </recommendedName>
    <alternativeName>
        <fullName>Vacuolar proton pump subunit E</fullName>
    </alternativeName>
</protein>
<gene>
    <name type="primary">VATE</name>
</gene>